<name>TRMD_MALP2</name>
<organism>
    <name type="scientific">Malacoplasma penetrans (strain HF-2)</name>
    <name type="common">Mycoplasma penetrans</name>
    <dbReference type="NCBI Taxonomy" id="272633"/>
    <lineage>
        <taxon>Bacteria</taxon>
        <taxon>Bacillati</taxon>
        <taxon>Mycoplasmatota</taxon>
        <taxon>Mycoplasmoidales</taxon>
        <taxon>Mycoplasmoidaceae</taxon>
        <taxon>Malacoplasma</taxon>
    </lineage>
</organism>
<protein>
    <recommendedName>
        <fullName evidence="1">tRNA (guanine-N(1)-)-methyltransferase</fullName>
        <ecNumber evidence="1">2.1.1.228</ecNumber>
    </recommendedName>
    <alternativeName>
        <fullName evidence="1">M1G-methyltransferase</fullName>
    </alternativeName>
    <alternativeName>
        <fullName evidence="1">tRNA [GM37] methyltransferase</fullName>
    </alternativeName>
</protein>
<accession>Q8CXQ6</accession>
<reference key="1">
    <citation type="journal article" date="2002" name="Nucleic Acids Res.">
        <title>The complete genomic sequence of Mycoplasma penetrans, an intracellular bacterial pathogen in humans.</title>
        <authorList>
            <person name="Sasaki Y."/>
            <person name="Ishikawa J."/>
            <person name="Yamashita A."/>
            <person name="Oshima K."/>
            <person name="Kenri T."/>
            <person name="Furuya K."/>
            <person name="Yoshino C."/>
            <person name="Horino A."/>
            <person name="Shiba T."/>
            <person name="Sasaki T."/>
            <person name="Hattori M."/>
        </authorList>
    </citation>
    <scope>NUCLEOTIDE SEQUENCE [LARGE SCALE GENOMIC DNA]</scope>
    <source>
        <strain>HF-2</strain>
    </source>
</reference>
<gene>
    <name evidence="1" type="primary">trmD</name>
    <name type="ordered locus">MYPE1020</name>
</gene>
<feature type="chain" id="PRO_0000060416" description="tRNA (guanine-N(1)-)-methyltransferase">
    <location>
        <begin position="1"/>
        <end position="226"/>
    </location>
</feature>
<feature type="binding site" evidence="1">
    <location>
        <position position="110"/>
    </location>
    <ligand>
        <name>S-adenosyl-L-methionine</name>
        <dbReference type="ChEBI" id="CHEBI:59789"/>
    </ligand>
</feature>
<feature type="binding site" evidence="1">
    <location>
        <begin position="129"/>
        <end position="134"/>
    </location>
    <ligand>
        <name>S-adenosyl-L-methionine</name>
        <dbReference type="ChEBI" id="CHEBI:59789"/>
    </ligand>
</feature>
<dbReference type="EC" id="2.1.1.228" evidence="1"/>
<dbReference type="EMBL" id="BA000026">
    <property type="protein sequence ID" value="BAC43893.1"/>
    <property type="molecule type" value="Genomic_DNA"/>
</dbReference>
<dbReference type="RefSeq" id="WP_011076929.1">
    <property type="nucleotide sequence ID" value="NC_004432.1"/>
</dbReference>
<dbReference type="SMR" id="Q8CXQ6"/>
<dbReference type="FunCoup" id="Q8CXQ6">
    <property type="interactions" value="198"/>
</dbReference>
<dbReference type="STRING" id="272633.gene:10731194"/>
<dbReference type="KEGG" id="mpe:MYPE1020"/>
<dbReference type="eggNOG" id="COG0336">
    <property type="taxonomic scope" value="Bacteria"/>
</dbReference>
<dbReference type="HOGENOM" id="CLU_047363_0_1_14"/>
<dbReference type="InParanoid" id="Q8CXQ6"/>
<dbReference type="Proteomes" id="UP000002522">
    <property type="component" value="Chromosome"/>
</dbReference>
<dbReference type="GO" id="GO:0005829">
    <property type="term" value="C:cytosol"/>
    <property type="evidence" value="ECO:0007669"/>
    <property type="project" value="TreeGrafter"/>
</dbReference>
<dbReference type="GO" id="GO:0052906">
    <property type="term" value="F:tRNA (guanine(37)-N1)-methyltransferase activity"/>
    <property type="evidence" value="ECO:0007669"/>
    <property type="project" value="UniProtKB-UniRule"/>
</dbReference>
<dbReference type="GO" id="GO:0002939">
    <property type="term" value="P:tRNA N1-guanine methylation"/>
    <property type="evidence" value="ECO:0007669"/>
    <property type="project" value="TreeGrafter"/>
</dbReference>
<dbReference type="CDD" id="cd18080">
    <property type="entry name" value="TrmD-like"/>
    <property type="match status" value="1"/>
</dbReference>
<dbReference type="FunFam" id="3.40.1280.10:FF:000001">
    <property type="entry name" value="tRNA (guanine-N(1)-)-methyltransferase"/>
    <property type="match status" value="1"/>
</dbReference>
<dbReference type="Gene3D" id="3.40.1280.10">
    <property type="match status" value="1"/>
</dbReference>
<dbReference type="Gene3D" id="1.10.1270.20">
    <property type="entry name" value="tRNA(m1g37)methyltransferase, domain 2"/>
    <property type="match status" value="1"/>
</dbReference>
<dbReference type="HAMAP" id="MF_00605">
    <property type="entry name" value="TrmD"/>
    <property type="match status" value="1"/>
</dbReference>
<dbReference type="InterPro" id="IPR029028">
    <property type="entry name" value="Alpha/beta_knot_MTases"/>
</dbReference>
<dbReference type="InterPro" id="IPR023148">
    <property type="entry name" value="tRNA_m1G_MeTrfase_C_sf"/>
</dbReference>
<dbReference type="InterPro" id="IPR002649">
    <property type="entry name" value="tRNA_m1G_MeTrfase_TrmD"/>
</dbReference>
<dbReference type="InterPro" id="IPR029026">
    <property type="entry name" value="tRNA_m1G_MTases_N"/>
</dbReference>
<dbReference type="InterPro" id="IPR016009">
    <property type="entry name" value="tRNA_MeTrfase_TRMD/TRM10"/>
</dbReference>
<dbReference type="NCBIfam" id="NF000648">
    <property type="entry name" value="PRK00026.1"/>
    <property type="match status" value="1"/>
</dbReference>
<dbReference type="NCBIfam" id="TIGR00088">
    <property type="entry name" value="trmD"/>
    <property type="match status" value="1"/>
</dbReference>
<dbReference type="PANTHER" id="PTHR46417">
    <property type="entry name" value="TRNA (GUANINE-N(1)-)-METHYLTRANSFERASE"/>
    <property type="match status" value="1"/>
</dbReference>
<dbReference type="PANTHER" id="PTHR46417:SF1">
    <property type="entry name" value="TRNA (GUANINE-N(1)-)-METHYLTRANSFERASE"/>
    <property type="match status" value="1"/>
</dbReference>
<dbReference type="Pfam" id="PF01746">
    <property type="entry name" value="tRNA_m1G_MT"/>
    <property type="match status" value="1"/>
</dbReference>
<dbReference type="PIRSF" id="PIRSF000386">
    <property type="entry name" value="tRNA_mtase"/>
    <property type="match status" value="1"/>
</dbReference>
<dbReference type="SUPFAM" id="SSF75217">
    <property type="entry name" value="alpha/beta knot"/>
    <property type="match status" value="1"/>
</dbReference>
<keyword id="KW-0963">Cytoplasm</keyword>
<keyword id="KW-0489">Methyltransferase</keyword>
<keyword id="KW-1185">Reference proteome</keyword>
<keyword id="KW-0949">S-adenosyl-L-methionine</keyword>
<keyword id="KW-0808">Transferase</keyword>
<keyword id="KW-0819">tRNA processing</keyword>
<comment type="function">
    <text evidence="1">Specifically methylates guanosine-37 in various tRNAs.</text>
</comment>
<comment type="catalytic activity">
    <reaction evidence="1">
        <text>guanosine(37) in tRNA + S-adenosyl-L-methionine = N(1)-methylguanosine(37) in tRNA + S-adenosyl-L-homocysteine + H(+)</text>
        <dbReference type="Rhea" id="RHEA:36899"/>
        <dbReference type="Rhea" id="RHEA-COMP:10145"/>
        <dbReference type="Rhea" id="RHEA-COMP:10147"/>
        <dbReference type="ChEBI" id="CHEBI:15378"/>
        <dbReference type="ChEBI" id="CHEBI:57856"/>
        <dbReference type="ChEBI" id="CHEBI:59789"/>
        <dbReference type="ChEBI" id="CHEBI:73542"/>
        <dbReference type="ChEBI" id="CHEBI:74269"/>
        <dbReference type="EC" id="2.1.1.228"/>
    </reaction>
</comment>
<comment type="subunit">
    <text evidence="1">Homodimer.</text>
</comment>
<comment type="subcellular location">
    <subcellularLocation>
        <location evidence="1">Cytoplasm</location>
    </subcellularLocation>
</comment>
<comment type="similarity">
    <text evidence="1">Belongs to the RNA methyltransferase TrmD family.</text>
</comment>
<evidence type="ECO:0000255" key="1">
    <source>
        <dbReference type="HAMAP-Rule" id="MF_00605"/>
    </source>
</evidence>
<sequence length="226" mass="25804">MKITVLSLFENFFNEFKNTSIIKKAIANNLVDIEIVNFRNFSKDSHNKVDDTPYGGGAGMVLTLQPIVDAINHVKTSNSKVVLLTPSGKTYNQQIANQFKTFEHLILICGHYEGFDERIINYVDYEISIGDYILTGGEIAAMAILDSVIRLIPNVISVNSLESESFDNNLLDYPNYTKPYNFNGYKVPEVLLSGNHKEINKVRKEWQINKTKINRKDLFIKYLKEN</sequence>
<proteinExistence type="inferred from homology"/>